<proteinExistence type="inferred from homology"/>
<sequence>MKGIVLVMDGMGDRPLKEFDNQTPLQAANTPNMDEMAKNGITGIMDSIAPGIIPGSDTAHLSILGYDPYEVYTGRGPFEAAGVGVDVIPGDIAFRCNFSTADENGIVTDRRAGRIREGTHEIVEVLNTMVLEDYPDIKIIFKESTGHRAVLVLRGEGLSDKVSDADPKVEGNKPKEVIPLDDSVEAKKTADILNKLVVKSYEMIKDHPVNLERIENNEPPANIIIPRGAGEVPVVEALNDKYEVNSACIAETGLIMGIGRFAGMDIIEMEDVTGGIDTNLENIRDTIIDQVKNSDHDFFLINIDGADEAGHDGQAVEKRDFIEKVDRVVMSELKKLEDVYIFLTADHSTPISVLNHSGDPVPVIITGPEVRVDDVCEYSEVAVAKGGLCRIRGADVMNIMMDLMNYAHKFGA</sequence>
<keyword id="KW-0324">Glycolysis</keyword>
<keyword id="KW-0413">Isomerase</keyword>
<dbReference type="EC" id="5.4.2.12" evidence="1"/>
<dbReference type="EMBL" id="CP000678">
    <property type="protein sequence ID" value="ABQ86862.1"/>
    <property type="molecule type" value="Genomic_DNA"/>
</dbReference>
<dbReference type="RefSeq" id="WP_004032416.1">
    <property type="nucleotide sequence ID" value="NZ_CP117965.1"/>
</dbReference>
<dbReference type="SMR" id="A5UKY4"/>
<dbReference type="STRING" id="420247.Msm_0657"/>
<dbReference type="EnsemblBacteria" id="ABQ86862">
    <property type="protein sequence ID" value="ABQ86862"/>
    <property type="gene ID" value="Msm_0657"/>
</dbReference>
<dbReference type="KEGG" id="msi:Msm_0657"/>
<dbReference type="PATRIC" id="fig|420247.28.peg.654"/>
<dbReference type="eggNOG" id="arCOG01696">
    <property type="taxonomic scope" value="Archaea"/>
</dbReference>
<dbReference type="HOGENOM" id="CLU_034906_2_0_2"/>
<dbReference type="UniPathway" id="UPA00109">
    <property type="reaction ID" value="UER00186"/>
</dbReference>
<dbReference type="Proteomes" id="UP000001992">
    <property type="component" value="Chromosome"/>
</dbReference>
<dbReference type="GO" id="GO:0046872">
    <property type="term" value="F:metal ion binding"/>
    <property type="evidence" value="ECO:0007669"/>
    <property type="project" value="InterPro"/>
</dbReference>
<dbReference type="GO" id="GO:0004619">
    <property type="term" value="F:phosphoglycerate mutase activity"/>
    <property type="evidence" value="ECO:0007669"/>
    <property type="project" value="UniProtKB-EC"/>
</dbReference>
<dbReference type="GO" id="GO:0006096">
    <property type="term" value="P:glycolytic process"/>
    <property type="evidence" value="ECO:0007669"/>
    <property type="project" value="UniProtKB-UniRule"/>
</dbReference>
<dbReference type="CDD" id="cd16011">
    <property type="entry name" value="iPGM_like"/>
    <property type="match status" value="1"/>
</dbReference>
<dbReference type="Gene3D" id="3.40.720.10">
    <property type="entry name" value="Alkaline Phosphatase, subunit A"/>
    <property type="match status" value="2"/>
</dbReference>
<dbReference type="HAMAP" id="MF_01402_A">
    <property type="entry name" value="ApgM_A"/>
    <property type="match status" value="1"/>
</dbReference>
<dbReference type="InterPro" id="IPR017850">
    <property type="entry name" value="Alkaline_phosphatase_core_sf"/>
</dbReference>
<dbReference type="InterPro" id="IPR023665">
    <property type="entry name" value="ApgAM_prokaryotes"/>
</dbReference>
<dbReference type="InterPro" id="IPR006124">
    <property type="entry name" value="Metalloenzyme"/>
</dbReference>
<dbReference type="InterPro" id="IPR004456">
    <property type="entry name" value="Pglycerate_mutase_ApgM"/>
</dbReference>
<dbReference type="NCBIfam" id="TIGR00306">
    <property type="entry name" value="apgM"/>
    <property type="match status" value="1"/>
</dbReference>
<dbReference type="NCBIfam" id="NF003104">
    <property type="entry name" value="PRK04024.1"/>
    <property type="match status" value="1"/>
</dbReference>
<dbReference type="PANTHER" id="PTHR31209">
    <property type="entry name" value="COFACTOR-INDEPENDENT PHOSPHOGLYCERATE MUTASE"/>
    <property type="match status" value="1"/>
</dbReference>
<dbReference type="PANTHER" id="PTHR31209:SF0">
    <property type="entry name" value="METALLOENZYME DOMAIN-CONTAINING PROTEIN"/>
    <property type="match status" value="1"/>
</dbReference>
<dbReference type="Pfam" id="PF01676">
    <property type="entry name" value="Metalloenzyme"/>
    <property type="match status" value="1"/>
</dbReference>
<dbReference type="Pfam" id="PF10143">
    <property type="entry name" value="PhosphMutase"/>
    <property type="match status" value="1"/>
</dbReference>
<dbReference type="PIRSF" id="PIRSF006392">
    <property type="entry name" value="IPGAM_arch"/>
    <property type="match status" value="1"/>
</dbReference>
<dbReference type="SUPFAM" id="SSF53649">
    <property type="entry name" value="Alkaline phosphatase-like"/>
    <property type="match status" value="1"/>
</dbReference>
<feature type="chain" id="PRO_1000087365" description="2,3-bisphosphoglycerate-independent phosphoglycerate mutase">
    <location>
        <begin position="1"/>
        <end position="412"/>
    </location>
</feature>
<comment type="function">
    <text evidence="1">Catalyzes the interconversion of 2-phosphoglycerate and 3-phosphoglycerate.</text>
</comment>
<comment type="catalytic activity">
    <reaction evidence="1">
        <text>(2R)-2-phosphoglycerate = (2R)-3-phosphoglycerate</text>
        <dbReference type="Rhea" id="RHEA:15901"/>
        <dbReference type="ChEBI" id="CHEBI:58272"/>
        <dbReference type="ChEBI" id="CHEBI:58289"/>
        <dbReference type="EC" id="5.4.2.12"/>
    </reaction>
</comment>
<comment type="pathway">
    <text evidence="1">Carbohydrate degradation; glycolysis; pyruvate from D-glyceraldehyde 3-phosphate: step 3/5.</text>
</comment>
<comment type="similarity">
    <text evidence="1">Belongs to the BPG-independent phosphoglycerate mutase family. A-PGAM subfamily.</text>
</comment>
<evidence type="ECO:0000255" key="1">
    <source>
        <dbReference type="HAMAP-Rule" id="MF_01402"/>
    </source>
</evidence>
<name>APGM_METS3</name>
<organism>
    <name type="scientific">Methanobrevibacter smithii (strain ATCC 35061 / DSM 861 / OCM 144 / PS)</name>
    <dbReference type="NCBI Taxonomy" id="420247"/>
    <lineage>
        <taxon>Archaea</taxon>
        <taxon>Methanobacteriati</taxon>
        <taxon>Methanobacteriota</taxon>
        <taxon>Methanomada group</taxon>
        <taxon>Methanobacteria</taxon>
        <taxon>Methanobacteriales</taxon>
        <taxon>Methanobacteriaceae</taxon>
        <taxon>Methanobrevibacter</taxon>
    </lineage>
</organism>
<gene>
    <name evidence="1" type="primary">apgM</name>
    <name type="ordered locus">Msm_0657</name>
</gene>
<reference key="1">
    <citation type="journal article" date="2007" name="Proc. Natl. Acad. Sci. U.S.A.">
        <title>Genomic and metabolic adaptations of Methanobrevibacter smithii to the human gut.</title>
        <authorList>
            <person name="Samuel B.S."/>
            <person name="Hansen E.E."/>
            <person name="Manchester J.K."/>
            <person name="Coutinho P.M."/>
            <person name="Henrissat B."/>
            <person name="Fulton R."/>
            <person name="Latreille P."/>
            <person name="Kim K."/>
            <person name="Wilson R.K."/>
            <person name="Gordon J.I."/>
        </authorList>
    </citation>
    <scope>NUCLEOTIDE SEQUENCE [LARGE SCALE GENOMIC DNA]</scope>
    <source>
        <strain>ATCC 35061 / DSM 861 / OCM 144 / PS</strain>
    </source>
</reference>
<protein>
    <recommendedName>
        <fullName evidence="1">2,3-bisphosphoglycerate-independent phosphoglycerate mutase</fullName>
        <shortName evidence="1">BPG-independent PGAM</shortName>
        <shortName evidence="1">Phosphoglyceromutase</shortName>
        <shortName evidence="1">aPGAM</shortName>
        <ecNumber evidence="1">5.4.2.12</ecNumber>
    </recommendedName>
</protein>
<accession>A5UKY4</accession>